<evidence type="ECO:0000255" key="1">
    <source>
        <dbReference type="HAMAP-Rule" id="MF_00094"/>
    </source>
</evidence>
<comment type="function">
    <text evidence="1">Peptide chain release factor 2 directs the termination of translation in response to the peptide chain termination codons UGA and UAA.</text>
</comment>
<comment type="subcellular location">
    <subcellularLocation>
        <location evidence="1">Cytoplasm</location>
    </subcellularLocation>
</comment>
<comment type="PTM">
    <text evidence="1">Methylated by PrmC. Methylation increases the termination efficiency of RF2.</text>
</comment>
<comment type="similarity">
    <text evidence="1">Belongs to the prokaryotic/mitochondrial release factor family.</text>
</comment>
<accession>C5CGS4</accession>
<feature type="chain" id="PRO_1000202711" description="Peptide chain release factor 2">
    <location>
        <begin position="1"/>
        <end position="370"/>
    </location>
</feature>
<feature type="modified residue" description="N5-methylglutamine" evidence="1">
    <location>
        <position position="249"/>
    </location>
</feature>
<gene>
    <name evidence="1" type="primary">prfB</name>
    <name type="ordered locus">Kole_1912</name>
</gene>
<sequence length="370" mass="42513">MLSYETNARIQELRDKFENIKTTVDVDKIKEKLSRIEKELSDPSVWSDQRRAGKLGQQAQALRSQLDLLNKVQELFENIDIAVELSEEDESYLENLNELLKEAEDMVKEFELNILLSSPYDAYNAYLSVHPGAGGTESQDWASMLLRMYIRWAERNNYKVTTIEEQPGEEAGIKSATINIAGPYAYGKLKYEAGVHRLVRISPFDANHRRHTSFASVSVFPEMDDDVEIDIRPEDLKIDTYRAGGAGGQHVNRTESAVRITHIPTGIVVTCQNERSQHQNKATAMKILKAKLFELELEKKRQEKMKLMGEQKDIAWGNQIRSYVFQPYTMVKDHRTNYETGDVQAVMDGYIDDFIEKELLFFASIDEDKE</sequence>
<proteinExistence type="inferred from homology"/>
<dbReference type="EMBL" id="CP001634">
    <property type="protein sequence ID" value="ACR80593.1"/>
    <property type="molecule type" value="Genomic_DNA"/>
</dbReference>
<dbReference type="RefSeq" id="WP_015869236.1">
    <property type="nucleotide sequence ID" value="NC_012785.1"/>
</dbReference>
<dbReference type="SMR" id="C5CGS4"/>
<dbReference type="STRING" id="521045.Kole_1912"/>
<dbReference type="KEGG" id="kol:Kole_1912"/>
<dbReference type="eggNOG" id="COG1186">
    <property type="taxonomic scope" value="Bacteria"/>
</dbReference>
<dbReference type="HOGENOM" id="CLU_036856_6_0_0"/>
<dbReference type="OrthoDB" id="9806673at2"/>
<dbReference type="Proteomes" id="UP000002382">
    <property type="component" value="Chromosome"/>
</dbReference>
<dbReference type="GO" id="GO:0005737">
    <property type="term" value="C:cytoplasm"/>
    <property type="evidence" value="ECO:0007669"/>
    <property type="project" value="UniProtKB-SubCell"/>
</dbReference>
<dbReference type="GO" id="GO:0016149">
    <property type="term" value="F:translation release factor activity, codon specific"/>
    <property type="evidence" value="ECO:0007669"/>
    <property type="project" value="UniProtKB-UniRule"/>
</dbReference>
<dbReference type="FunFam" id="3.30.160.20:FF:000010">
    <property type="entry name" value="Peptide chain release factor 2"/>
    <property type="match status" value="1"/>
</dbReference>
<dbReference type="Gene3D" id="3.30.160.20">
    <property type="match status" value="1"/>
</dbReference>
<dbReference type="Gene3D" id="3.30.70.1660">
    <property type="match status" value="1"/>
</dbReference>
<dbReference type="Gene3D" id="1.20.58.410">
    <property type="entry name" value="Release factor"/>
    <property type="match status" value="1"/>
</dbReference>
<dbReference type="HAMAP" id="MF_00094">
    <property type="entry name" value="Rel_fac_2"/>
    <property type="match status" value="1"/>
</dbReference>
<dbReference type="InterPro" id="IPR005139">
    <property type="entry name" value="PCRF"/>
</dbReference>
<dbReference type="InterPro" id="IPR000352">
    <property type="entry name" value="Pep_chain_release_fac_I"/>
</dbReference>
<dbReference type="InterPro" id="IPR045853">
    <property type="entry name" value="Pep_chain_release_fac_I_sf"/>
</dbReference>
<dbReference type="InterPro" id="IPR004374">
    <property type="entry name" value="PrfB"/>
</dbReference>
<dbReference type="NCBIfam" id="TIGR00020">
    <property type="entry name" value="prfB"/>
    <property type="match status" value="1"/>
</dbReference>
<dbReference type="PANTHER" id="PTHR43116:SF3">
    <property type="entry name" value="CLASS I PEPTIDE CHAIN RELEASE FACTOR"/>
    <property type="match status" value="1"/>
</dbReference>
<dbReference type="PANTHER" id="PTHR43116">
    <property type="entry name" value="PEPTIDE CHAIN RELEASE FACTOR 2"/>
    <property type="match status" value="1"/>
</dbReference>
<dbReference type="Pfam" id="PF03462">
    <property type="entry name" value="PCRF"/>
    <property type="match status" value="1"/>
</dbReference>
<dbReference type="Pfam" id="PF00472">
    <property type="entry name" value="RF-1"/>
    <property type="match status" value="1"/>
</dbReference>
<dbReference type="SMART" id="SM00937">
    <property type="entry name" value="PCRF"/>
    <property type="match status" value="1"/>
</dbReference>
<dbReference type="SUPFAM" id="SSF75620">
    <property type="entry name" value="Release factor"/>
    <property type="match status" value="1"/>
</dbReference>
<dbReference type="PROSITE" id="PS00745">
    <property type="entry name" value="RF_PROK_I"/>
    <property type="match status" value="1"/>
</dbReference>
<organism>
    <name type="scientific">Kosmotoga olearia (strain ATCC BAA-1733 / DSM 21960 / TBF 19.5.1)</name>
    <dbReference type="NCBI Taxonomy" id="521045"/>
    <lineage>
        <taxon>Bacteria</taxon>
        <taxon>Thermotogati</taxon>
        <taxon>Thermotogota</taxon>
        <taxon>Thermotogae</taxon>
        <taxon>Kosmotogales</taxon>
        <taxon>Kosmotogaceae</taxon>
        <taxon>Kosmotoga</taxon>
    </lineage>
</organism>
<name>RF2_KOSOT</name>
<protein>
    <recommendedName>
        <fullName evidence="1">Peptide chain release factor 2</fullName>
        <shortName evidence="1">RF-2</shortName>
    </recommendedName>
</protein>
<reference key="1">
    <citation type="submission" date="2009-06" db="EMBL/GenBank/DDBJ databases">
        <title>Complete sequence of Thermotogales bacterium TBF 19.5.1.</title>
        <authorList>
            <consortium name="US DOE Joint Genome Institute"/>
            <person name="Lucas S."/>
            <person name="Copeland A."/>
            <person name="Lapidus A."/>
            <person name="Glavina del Rio T."/>
            <person name="Tice H."/>
            <person name="Bruce D."/>
            <person name="Goodwin L."/>
            <person name="Pitluck S."/>
            <person name="Chertkov O."/>
            <person name="Brettin T."/>
            <person name="Detter J.C."/>
            <person name="Han C."/>
            <person name="Schmutz J."/>
            <person name="Larimer F."/>
            <person name="Land M."/>
            <person name="Hauser L."/>
            <person name="Kyrpides N."/>
            <person name="Ovchinnikova G."/>
            <person name="Noll K."/>
        </authorList>
    </citation>
    <scope>NUCLEOTIDE SEQUENCE [LARGE SCALE GENOMIC DNA]</scope>
    <source>
        <strain>ATCC BAA-1733 / DSM 21960 / TBF 19.5.1</strain>
    </source>
</reference>
<keyword id="KW-0963">Cytoplasm</keyword>
<keyword id="KW-0488">Methylation</keyword>
<keyword id="KW-0648">Protein biosynthesis</keyword>
<keyword id="KW-1185">Reference proteome</keyword>